<protein>
    <recommendedName>
        <fullName evidence="1">Quinolinate synthase</fullName>
        <ecNumber evidence="1">2.5.1.72</ecNumber>
    </recommendedName>
</protein>
<name>NADA_CLOD6</name>
<sequence>MDKDLTYQIKELKKEKNAIILAHFYQPPEIQELADAVGDSYYLSEIARDCKEEVVVFCGVRFMGESAKILSPEKTVLMPVSNAGCAMADMVDEEGVIKLKQQYPNALVVCYINSTAKVKAHCDVSVTSSSAIKILENIDNKEIIFLPDKNLGGYIAEQFPDKNFIFWDGYCKYHNNIRAEEIIELKDKYKNAEVLVHPECKKEIRDLGDYVGSTSGIIKYATNSKNKDFIIATEEGILHELKKNNPNKNFYIPGGKILCTDMKKTTLENLYSTLKNMENEVIVEDEIMEKALNSLLNMHKLAEG</sequence>
<comment type="function">
    <text evidence="1">Catalyzes the condensation of iminoaspartate with dihydroxyacetone phosphate to form quinolinate.</text>
</comment>
<comment type="catalytic activity">
    <reaction evidence="1">
        <text>iminosuccinate + dihydroxyacetone phosphate = quinolinate + phosphate + 2 H2O + H(+)</text>
        <dbReference type="Rhea" id="RHEA:25888"/>
        <dbReference type="ChEBI" id="CHEBI:15377"/>
        <dbReference type="ChEBI" id="CHEBI:15378"/>
        <dbReference type="ChEBI" id="CHEBI:29959"/>
        <dbReference type="ChEBI" id="CHEBI:43474"/>
        <dbReference type="ChEBI" id="CHEBI:57642"/>
        <dbReference type="ChEBI" id="CHEBI:77875"/>
        <dbReference type="EC" id="2.5.1.72"/>
    </reaction>
    <physiologicalReaction direction="left-to-right" evidence="1">
        <dbReference type="Rhea" id="RHEA:25889"/>
    </physiologicalReaction>
</comment>
<comment type="cofactor">
    <cofactor evidence="1">
        <name>[4Fe-4S] cluster</name>
        <dbReference type="ChEBI" id="CHEBI:49883"/>
    </cofactor>
    <text evidence="1">Binds 1 [4Fe-4S] cluster per subunit.</text>
</comment>
<comment type="pathway">
    <text evidence="1">Cofactor biosynthesis; NAD(+) biosynthesis; quinolinate from iminoaspartate: step 1/1.</text>
</comment>
<comment type="subcellular location">
    <subcellularLocation>
        <location evidence="1">Cytoplasm</location>
    </subcellularLocation>
</comment>
<comment type="similarity">
    <text evidence="1">Belongs to the quinolinate synthase family. Type 2 subfamily.</text>
</comment>
<organism>
    <name type="scientific">Clostridioides difficile (strain 630)</name>
    <name type="common">Peptoclostridium difficile</name>
    <dbReference type="NCBI Taxonomy" id="272563"/>
    <lineage>
        <taxon>Bacteria</taxon>
        <taxon>Bacillati</taxon>
        <taxon>Bacillota</taxon>
        <taxon>Clostridia</taxon>
        <taxon>Peptostreptococcales</taxon>
        <taxon>Peptostreptococcaceae</taxon>
        <taxon>Clostridioides</taxon>
    </lineage>
</organism>
<proteinExistence type="inferred from homology"/>
<accession>Q185P4</accession>
<gene>
    <name evidence="1" type="primary">nadA</name>
    <name type="ordered locus">CD630_23720</name>
</gene>
<reference key="1">
    <citation type="journal article" date="2006" name="Nat. Genet.">
        <title>The multidrug-resistant human pathogen Clostridium difficile has a highly mobile, mosaic genome.</title>
        <authorList>
            <person name="Sebaihia M."/>
            <person name="Wren B.W."/>
            <person name="Mullany P."/>
            <person name="Fairweather N.F."/>
            <person name="Minton N."/>
            <person name="Stabler R."/>
            <person name="Thomson N.R."/>
            <person name="Roberts A.P."/>
            <person name="Cerdeno-Tarraga A.M."/>
            <person name="Wang H."/>
            <person name="Holden M.T.G."/>
            <person name="Wright A."/>
            <person name="Churcher C."/>
            <person name="Quail M.A."/>
            <person name="Baker S."/>
            <person name="Bason N."/>
            <person name="Brooks K."/>
            <person name="Chillingworth T."/>
            <person name="Cronin A."/>
            <person name="Davis P."/>
            <person name="Dowd L."/>
            <person name="Fraser A."/>
            <person name="Feltwell T."/>
            <person name="Hance Z."/>
            <person name="Holroyd S."/>
            <person name="Jagels K."/>
            <person name="Moule S."/>
            <person name="Mungall K."/>
            <person name="Price C."/>
            <person name="Rabbinowitsch E."/>
            <person name="Sharp S."/>
            <person name="Simmonds M."/>
            <person name="Stevens K."/>
            <person name="Unwin L."/>
            <person name="Whithead S."/>
            <person name="Dupuy B."/>
            <person name="Dougan G."/>
            <person name="Barrell B."/>
            <person name="Parkhill J."/>
        </authorList>
    </citation>
    <scope>NUCLEOTIDE SEQUENCE [LARGE SCALE GENOMIC DNA]</scope>
    <source>
        <strain>630</strain>
    </source>
</reference>
<evidence type="ECO:0000255" key="1">
    <source>
        <dbReference type="HAMAP-Rule" id="MF_00568"/>
    </source>
</evidence>
<dbReference type="EC" id="2.5.1.72" evidence="1"/>
<dbReference type="EMBL" id="AM180355">
    <property type="protein sequence ID" value="CAJ69257.1"/>
    <property type="molecule type" value="Genomic_DNA"/>
</dbReference>
<dbReference type="RefSeq" id="WP_004454668.1">
    <property type="nucleotide sequence ID" value="NZ_JAUPES010000016.1"/>
</dbReference>
<dbReference type="RefSeq" id="YP_001088884.1">
    <property type="nucleotide sequence ID" value="NC_009089.1"/>
</dbReference>
<dbReference type="SMR" id="Q185P4"/>
<dbReference type="STRING" id="272563.CD630_23720"/>
<dbReference type="EnsemblBacteria" id="CAJ69257">
    <property type="protein sequence ID" value="CAJ69257"/>
    <property type="gene ID" value="CD630_23720"/>
</dbReference>
<dbReference type="GeneID" id="66354766"/>
<dbReference type="KEGG" id="cdf:CD630_23720"/>
<dbReference type="KEGG" id="pdc:CDIF630_02612"/>
<dbReference type="PATRIC" id="fig|272563.120.peg.2505"/>
<dbReference type="eggNOG" id="COG0379">
    <property type="taxonomic scope" value="Bacteria"/>
</dbReference>
<dbReference type="OrthoDB" id="9801204at2"/>
<dbReference type="PhylomeDB" id="Q185P4"/>
<dbReference type="BioCyc" id="PDIF272563:G12WB-2522-MONOMER"/>
<dbReference type="UniPathway" id="UPA00253">
    <property type="reaction ID" value="UER00327"/>
</dbReference>
<dbReference type="Proteomes" id="UP000001978">
    <property type="component" value="Chromosome"/>
</dbReference>
<dbReference type="GO" id="GO:0005829">
    <property type="term" value="C:cytosol"/>
    <property type="evidence" value="ECO:0007669"/>
    <property type="project" value="TreeGrafter"/>
</dbReference>
<dbReference type="GO" id="GO:0051539">
    <property type="term" value="F:4 iron, 4 sulfur cluster binding"/>
    <property type="evidence" value="ECO:0007669"/>
    <property type="project" value="UniProtKB-KW"/>
</dbReference>
<dbReference type="GO" id="GO:0046872">
    <property type="term" value="F:metal ion binding"/>
    <property type="evidence" value="ECO:0007669"/>
    <property type="project" value="UniProtKB-KW"/>
</dbReference>
<dbReference type="GO" id="GO:0008987">
    <property type="term" value="F:quinolinate synthetase A activity"/>
    <property type="evidence" value="ECO:0007669"/>
    <property type="project" value="UniProtKB-UniRule"/>
</dbReference>
<dbReference type="GO" id="GO:0034628">
    <property type="term" value="P:'de novo' NAD biosynthetic process from L-aspartate"/>
    <property type="evidence" value="ECO:0007669"/>
    <property type="project" value="TreeGrafter"/>
</dbReference>
<dbReference type="FunFam" id="3.40.50.10800:FF:000001">
    <property type="entry name" value="Quinolinate synthase A"/>
    <property type="match status" value="1"/>
</dbReference>
<dbReference type="Gene3D" id="3.40.50.10800">
    <property type="entry name" value="NadA-like"/>
    <property type="match status" value="3"/>
</dbReference>
<dbReference type="HAMAP" id="MF_00568">
    <property type="entry name" value="NadA_type2"/>
    <property type="match status" value="1"/>
</dbReference>
<dbReference type="InterPro" id="IPR003473">
    <property type="entry name" value="NadA"/>
</dbReference>
<dbReference type="InterPro" id="IPR036094">
    <property type="entry name" value="NadA_sf"/>
</dbReference>
<dbReference type="InterPro" id="IPR023066">
    <property type="entry name" value="Quinolinate_synth_type2"/>
</dbReference>
<dbReference type="NCBIfam" id="TIGR00550">
    <property type="entry name" value="nadA"/>
    <property type="match status" value="1"/>
</dbReference>
<dbReference type="NCBIfam" id="NF006878">
    <property type="entry name" value="PRK09375.1-2"/>
    <property type="match status" value="1"/>
</dbReference>
<dbReference type="PANTHER" id="PTHR30573:SF0">
    <property type="entry name" value="QUINOLINATE SYNTHASE, CHLOROPLASTIC"/>
    <property type="match status" value="1"/>
</dbReference>
<dbReference type="PANTHER" id="PTHR30573">
    <property type="entry name" value="QUINOLINATE SYNTHETASE A"/>
    <property type="match status" value="1"/>
</dbReference>
<dbReference type="Pfam" id="PF02445">
    <property type="entry name" value="NadA"/>
    <property type="match status" value="1"/>
</dbReference>
<dbReference type="SUPFAM" id="SSF142754">
    <property type="entry name" value="NadA-like"/>
    <property type="match status" value="1"/>
</dbReference>
<keyword id="KW-0004">4Fe-4S</keyword>
<keyword id="KW-0963">Cytoplasm</keyword>
<keyword id="KW-0408">Iron</keyword>
<keyword id="KW-0411">Iron-sulfur</keyword>
<keyword id="KW-0479">Metal-binding</keyword>
<keyword id="KW-0662">Pyridine nucleotide biosynthesis</keyword>
<keyword id="KW-1185">Reference proteome</keyword>
<keyword id="KW-0808">Transferase</keyword>
<feature type="chain" id="PRO_1000061150" description="Quinolinate synthase">
    <location>
        <begin position="1"/>
        <end position="304"/>
    </location>
</feature>
<feature type="binding site" evidence="1">
    <location>
        <position position="23"/>
    </location>
    <ligand>
        <name>iminosuccinate</name>
        <dbReference type="ChEBI" id="CHEBI:77875"/>
    </ligand>
</feature>
<feature type="binding site" evidence="1">
    <location>
        <position position="40"/>
    </location>
    <ligand>
        <name>iminosuccinate</name>
        <dbReference type="ChEBI" id="CHEBI:77875"/>
    </ligand>
</feature>
<feature type="binding site" evidence="1">
    <location>
        <position position="85"/>
    </location>
    <ligand>
        <name>[4Fe-4S] cluster</name>
        <dbReference type="ChEBI" id="CHEBI:49883"/>
    </ligand>
</feature>
<feature type="binding site" evidence="1">
    <location>
        <begin position="111"/>
        <end position="113"/>
    </location>
    <ligand>
        <name>iminosuccinate</name>
        <dbReference type="ChEBI" id="CHEBI:77875"/>
    </ligand>
</feature>
<feature type="binding site" evidence="1">
    <location>
        <position position="128"/>
    </location>
    <ligand>
        <name>iminosuccinate</name>
        <dbReference type="ChEBI" id="CHEBI:77875"/>
    </ligand>
</feature>
<feature type="binding site" evidence="1">
    <location>
        <position position="171"/>
    </location>
    <ligand>
        <name>[4Fe-4S] cluster</name>
        <dbReference type="ChEBI" id="CHEBI:49883"/>
    </ligand>
</feature>
<feature type="binding site" evidence="1">
    <location>
        <begin position="197"/>
        <end position="199"/>
    </location>
    <ligand>
        <name>iminosuccinate</name>
        <dbReference type="ChEBI" id="CHEBI:77875"/>
    </ligand>
</feature>
<feature type="binding site" evidence="1">
    <location>
        <position position="214"/>
    </location>
    <ligand>
        <name>iminosuccinate</name>
        <dbReference type="ChEBI" id="CHEBI:77875"/>
    </ligand>
</feature>
<feature type="binding site" evidence="1">
    <location>
        <position position="259"/>
    </location>
    <ligand>
        <name>[4Fe-4S] cluster</name>
        <dbReference type="ChEBI" id="CHEBI:49883"/>
    </ligand>
</feature>